<comment type="function">
    <text evidence="1">Hydrolyzes trehalose to glucose. Could be involved, in cells returning to low osmolarity conditions, in the utilization of the accumulated cytoplasmic trehalose, which was synthesized in response to high osmolarity.</text>
</comment>
<comment type="catalytic activity">
    <reaction evidence="1">
        <text>alpha,alpha-trehalose + H2O = alpha-D-glucose + beta-D-glucose</text>
        <dbReference type="Rhea" id="RHEA:32675"/>
        <dbReference type="ChEBI" id="CHEBI:15377"/>
        <dbReference type="ChEBI" id="CHEBI:15903"/>
        <dbReference type="ChEBI" id="CHEBI:16551"/>
        <dbReference type="ChEBI" id="CHEBI:17925"/>
        <dbReference type="EC" id="3.2.1.28"/>
    </reaction>
</comment>
<comment type="pathway">
    <text evidence="1">Glycan degradation; trehalose degradation; D-glucose from alpha,alpha-trehalose: step 1/1.</text>
</comment>
<comment type="subunit">
    <text evidence="1">Monomer.</text>
</comment>
<comment type="subcellular location">
    <subcellularLocation>
        <location evidence="1">Cytoplasm</location>
    </subcellularLocation>
</comment>
<comment type="similarity">
    <text evidence="1">Belongs to the glycosyl hydrolase 37 family.</text>
</comment>
<protein>
    <recommendedName>
        <fullName evidence="1">Cytoplasmic trehalase</fullName>
        <ecNumber evidence="1">3.2.1.28</ecNumber>
    </recommendedName>
    <alternativeName>
        <fullName evidence="1">Alpha,alpha-trehalase</fullName>
    </alternativeName>
    <alternativeName>
        <fullName evidence="1">Alpha,alpha-trehalose glucohydrolase</fullName>
    </alternativeName>
</protein>
<name>TREF_SALAR</name>
<proteinExistence type="inferred from homology"/>
<keyword id="KW-0963">Cytoplasm</keyword>
<keyword id="KW-0326">Glycosidase</keyword>
<keyword id="KW-0378">Hydrolase</keyword>
<keyword id="KW-1185">Reference proteome</keyword>
<organism>
    <name type="scientific">Salmonella arizonae (strain ATCC BAA-731 / CDC346-86 / RSK2980)</name>
    <dbReference type="NCBI Taxonomy" id="41514"/>
    <lineage>
        <taxon>Bacteria</taxon>
        <taxon>Pseudomonadati</taxon>
        <taxon>Pseudomonadota</taxon>
        <taxon>Gammaproteobacteria</taxon>
        <taxon>Enterobacterales</taxon>
        <taxon>Enterobacteriaceae</taxon>
        <taxon>Salmonella</taxon>
    </lineage>
</organism>
<evidence type="ECO:0000255" key="1">
    <source>
        <dbReference type="HAMAP-Rule" id="MF_01059"/>
    </source>
</evidence>
<sequence>MLHQKLNPTSSEDLTIDVDLLYETDPCELKLDEMIEAEPEPEMIEGLPASDALTPADRYLELFEHVQSTKLFPDSKTFPDCAPKMDPLDILIRYRKVRRHRDFDLRRFVENHFWLPETLSSEYVSNPENSLKEHIDQLWPILTREPQDHIPWSSLLALPQSYIVPGGRFSETYYWDSYFTMLGLAESGREDLLKCMADNFAWMIENYGHIPNGNRTYYLSRSQPPVFALMVELFEEDGVRGARRYLDHLKMEYAFWMDGAESLALNQAYRHVVRMPDGSLLNRYWDDRDTPRDESWLEDVETAKHSGRPPNEVYRDLRAGAASGWDYSSRWLRDAGRLASIRTTQFIPIDLNAFLYKLESAIANISALKGERDTEALFRQKASDRRAAVNHYLWDDENGCYRDYDWRREEMALFSAASIVPLYVGMANHEQADRLANVVRSRLLTPGGIMATEYETGEQWDKPNGWAPLQWMAIQGFKLYGDDMLGDEIAHNWLKTVNHFYQEHHKLIEKYHISGGTPREGGGGEYPLQDGFGWTNGVVRRLIGLYGEP</sequence>
<accession>A9MLK7</accession>
<feature type="chain" id="PRO_1000084458" description="Cytoplasmic trehalase">
    <location>
        <begin position="1"/>
        <end position="549"/>
    </location>
</feature>
<feature type="active site" description="Proton donor/acceptor" evidence="1">
    <location>
        <position position="326"/>
    </location>
</feature>
<feature type="active site" description="Proton donor/acceptor" evidence="1">
    <location>
        <position position="509"/>
    </location>
</feature>
<feature type="binding site" evidence="1">
    <location>
        <position position="168"/>
    </location>
    <ligand>
        <name>substrate</name>
    </ligand>
</feature>
<feature type="binding site" evidence="1">
    <location>
        <begin position="175"/>
        <end position="176"/>
    </location>
    <ligand>
        <name>substrate</name>
    </ligand>
</feature>
<feature type="binding site" evidence="1">
    <location>
        <position position="212"/>
    </location>
    <ligand>
        <name>substrate</name>
    </ligand>
</feature>
<feature type="binding site" evidence="1">
    <location>
        <begin position="221"/>
        <end position="223"/>
    </location>
    <ligand>
        <name>substrate</name>
    </ligand>
</feature>
<feature type="binding site" evidence="1">
    <location>
        <begin position="292"/>
        <end position="294"/>
    </location>
    <ligand>
        <name>substrate</name>
    </ligand>
</feature>
<feature type="binding site" evidence="1">
    <location>
        <position position="324"/>
    </location>
    <ligand>
        <name>substrate</name>
    </ligand>
</feature>
<feature type="binding site" evidence="1">
    <location>
        <position position="525"/>
    </location>
    <ligand>
        <name>substrate</name>
    </ligand>
</feature>
<dbReference type="EC" id="3.2.1.28" evidence="1"/>
<dbReference type="EMBL" id="CP000880">
    <property type="protein sequence ID" value="ABX23826.1"/>
    <property type="molecule type" value="Genomic_DNA"/>
</dbReference>
<dbReference type="SMR" id="A9MLK7"/>
<dbReference type="STRING" id="41514.SARI_04033"/>
<dbReference type="CAZy" id="GH37">
    <property type="family name" value="Glycoside Hydrolase Family 37"/>
</dbReference>
<dbReference type="KEGG" id="ses:SARI_04033"/>
<dbReference type="HOGENOM" id="CLU_006451_3_1_6"/>
<dbReference type="UniPathway" id="UPA00300">
    <property type="reaction ID" value="UER00535"/>
</dbReference>
<dbReference type="Proteomes" id="UP000002084">
    <property type="component" value="Chromosome"/>
</dbReference>
<dbReference type="GO" id="GO:0005737">
    <property type="term" value="C:cytoplasm"/>
    <property type="evidence" value="ECO:0007669"/>
    <property type="project" value="UniProtKB-SubCell"/>
</dbReference>
<dbReference type="GO" id="GO:0004555">
    <property type="term" value="F:alpha,alpha-trehalase activity"/>
    <property type="evidence" value="ECO:0007669"/>
    <property type="project" value="UniProtKB-UniRule"/>
</dbReference>
<dbReference type="GO" id="GO:0071474">
    <property type="term" value="P:cellular hyperosmotic response"/>
    <property type="evidence" value="ECO:0007669"/>
    <property type="project" value="InterPro"/>
</dbReference>
<dbReference type="GO" id="GO:0005993">
    <property type="term" value="P:trehalose catabolic process"/>
    <property type="evidence" value="ECO:0007669"/>
    <property type="project" value="UniProtKB-UniRule"/>
</dbReference>
<dbReference type="FunFam" id="1.50.10.10:FF:000003">
    <property type="entry name" value="Cytoplasmic trehalase"/>
    <property type="match status" value="1"/>
</dbReference>
<dbReference type="Gene3D" id="1.50.10.10">
    <property type="match status" value="1"/>
</dbReference>
<dbReference type="HAMAP" id="MF_01059">
    <property type="entry name" value="Cyt_trehalase"/>
    <property type="match status" value="1"/>
</dbReference>
<dbReference type="InterPro" id="IPR008928">
    <property type="entry name" value="6-hairpin_glycosidase_sf"/>
</dbReference>
<dbReference type="InterPro" id="IPR012341">
    <property type="entry name" value="6hp_glycosidase-like_sf"/>
</dbReference>
<dbReference type="InterPro" id="IPR023715">
    <property type="entry name" value="Cyt_trehalase"/>
</dbReference>
<dbReference type="InterPro" id="IPR001661">
    <property type="entry name" value="Glyco_hydro_37"/>
</dbReference>
<dbReference type="InterPro" id="IPR018232">
    <property type="entry name" value="Glyco_hydro_37_CS"/>
</dbReference>
<dbReference type="NCBIfam" id="NF009773">
    <property type="entry name" value="PRK13270.1"/>
    <property type="match status" value="1"/>
</dbReference>
<dbReference type="NCBIfam" id="NF009774">
    <property type="entry name" value="PRK13271.1"/>
    <property type="match status" value="1"/>
</dbReference>
<dbReference type="PANTHER" id="PTHR23403:SF8">
    <property type="entry name" value="CYTOPLASMIC TREHALASE"/>
    <property type="match status" value="1"/>
</dbReference>
<dbReference type="PANTHER" id="PTHR23403">
    <property type="entry name" value="TREHALASE"/>
    <property type="match status" value="1"/>
</dbReference>
<dbReference type="Pfam" id="PF01204">
    <property type="entry name" value="Trehalase"/>
    <property type="match status" value="1"/>
</dbReference>
<dbReference type="PRINTS" id="PR00744">
    <property type="entry name" value="GLHYDRLASE37"/>
</dbReference>
<dbReference type="SUPFAM" id="SSF48208">
    <property type="entry name" value="Six-hairpin glycosidases"/>
    <property type="match status" value="1"/>
</dbReference>
<dbReference type="PROSITE" id="PS00927">
    <property type="entry name" value="TREHALASE_1"/>
    <property type="match status" value="1"/>
</dbReference>
<dbReference type="PROSITE" id="PS00928">
    <property type="entry name" value="TREHALASE_2"/>
    <property type="match status" value="1"/>
</dbReference>
<reference key="1">
    <citation type="submission" date="2007-11" db="EMBL/GenBank/DDBJ databases">
        <authorList>
            <consortium name="The Salmonella enterica serovar Arizonae Genome Sequencing Project"/>
            <person name="McClelland M."/>
            <person name="Sanderson E.K."/>
            <person name="Porwollik S."/>
            <person name="Spieth J."/>
            <person name="Clifton W.S."/>
            <person name="Fulton R."/>
            <person name="Chunyan W."/>
            <person name="Wollam A."/>
            <person name="Shah N."/>
            <person name="Pepin K."/>
            <person name="Bhonagiri V."/>
            <person name="Nash W."/>
            <person name="Johnson M."/>
            <person name="Thiruvilangam P."/>
            <person name="Wilson R."/>
        </authorList>
    </citation>
    <scope>NUCLEOTIDE SEQUENCE [LARGE SCALE GENOMIC DNA]</scope>
    <source>
        <strain>ATCC BAA-731 / CDC346-86 / RSK2980</strain>
    </source>
</reference>
<gene>
    <name evidence="1" type="primary">treF</name>
    <name type="ordered locus">SARI_04033</name>
</gene>